<name>GPMA_BARHE</name>
<organism>
    <name type="scientific">Bartonella henselae (strain ATCC 49882 / DSM 28221 / CCUG 30454 / Houston 1)</name>
    <name type="common">Rochalimaea henselae</name>
    <dbReference type="NCBI Taxonomy" id="283166"/>
    <lineage>
        <taxon>Bacteria</taxon>
        <taxon>Pseudomonadati</taxon>
        <taxon>Pseudomonadota</taxon>
        <taxon>Alphaproteobacteria</taxon>
        <taxon>Hyphomicrobiales</taxon>
        <taxon>Bartonellaceae</taxon>
        <taxon>Bartonella</taxon>
    </lineage>
</organism>
<comment type="function">
    <text evidence="1">Catalyzes the interconversion of 2-phosphoglycerate and 3-phosphoglycerate.</text>
</comment>
<comment type="catalytic activity">
    <reaction evidence="1">
        <text>(2R)-2-phosphoglycerate = (2R)-3-phosphoglycerate</text>
        <dbReference type="Rhea" id="RHEA:15901"/>
        <dbReference type="ChEBI" id="CHEBI:58272"/>
        <dbReference type="ChEBI" id="CHEBI:58289"/>
        <dbReference type="EC" id="5.4.2.11"/>
    </reaction>
</comment>
<comment type="pathway">
    <text evidence="1">Carbohydrate degradation; glycolysis; pyruvate from D-glyceraldehyde 3-phosphate: step 3/5.</text>
</comment>
<comment type="subunit">
    <text evidence="1">Homodimer.</text>
</comment>
<comment type="similarity">
    <text evidence="1">Belongs to the phosphoglycerate mutase family. BPG-dependent PGAM subfamily.</text>
</comment>
<accession>Q8L1Z7</accession>
<dbReference type="EC" id="5.4.2.11" evidence="1"/>
<dbReference type="EMBL" id="AY074773">
    <property type="protein sequence ID" value="AAL74286.1"/>
    <property type="molecule type" value="Genomic_DNA"/>
</dbReference>
<dbReference type="EMBL" id="BX897699">
    <property type="protein sequence ID" value="CAF28027.1"/>
    <property type="molecule type" value="Genomic_DNA"/>
</dbReference>
<dbReference type="RefSeq" id="WP_011181075.1">
    <property type="nucleotide sequence ID" value="NZ_LRIJ02000001.1"/>
</dbReference>
<dbReference type="SMR" id="Q8L1Z7"/>
<dbReference type="PaxDb" id="283166-BH12450"/>
<dbReference type="EnsemblBacteria" id="CAF28027">
    <property type="protein sequence ID" value="CAF28027"/>
    <property type="gene ID" value="BH12450"/>
</dbReference>
<dbReference type="KEGG" id="bhe:BH12450"/>
<dbReference type="eggNOG" id="COG0588">
    <property type="taxonomic scope" value="Bacteria"/>
</dbReference>
<dbReference type="OrthoDB" id="9781415at2"/>
<dbReference type="UniPathway" id="UPA00109">
    <property type="reaction ID" value="UER00186"/>
</dbReference>
<dbReference type="Proteomes" id="UP000000421">
    <property type="component" value="Chromosome"/>
</dbReference>
<dbReference type="GO" id="GO:0004619">
    <property type="term" value="F:phosphoglycerate mutase activity"/>
    <property type="evidence" value="ECO:0007669"/>
    <property type="project" value="UniProtKB-EC"/>
</dbReference>
<dbReference type="GO" id="GO:0006094">
    <property type="term" value="P:gluconeogenesis"/>
    <property type="evidence" value="ECO:0007669"/>
    <property type="project" value="UniProtKB-UniRule"/>
</dbReference>
<dbReference type="GO" id="GO:0006096">
    <property type="term" value="P:glycolytic process"/>
    <property type="evidence" value="ECO:0007669"/>
    <property type="project" value="UniProtKB-UniRule"/>
</dbReference>
<dbReference type="CDD" id="cd07067">
    <property type="entry name" value="HP_PGM_like"/>
    <property type="match status" value="1"/>
</dbReference>
<dbReference type="Gene3D" id="3.40.50.1240">
    <property type="entry name" value="Phosphoglycerate mutase-like"/>
    <property type="match status" value="1"/>
</dbReference>
<dbReference type="HAMAP" id="MF_01039">
    <property type="entry name" value="PGAM_GpmA"/>
    <property type="match status" value="1"/>
</dbReference>
<dbReference type="InterPro" id="IPR013078">
    <property type="entry name" value="His_Pase_superF_clade-1"/>
</dbReference>
<dbReference type="InterPro" id="IPR029033">
    <property type="entry name" value="His_PPase_superfam"/>
</dbReference>
<dbReference type="InterPro" id="IPR001345">
    <property type="entry name" value="PG/BPGM_mutase_AS"/>
</dbReference>
<dbReference type="InterPro" id="IPR005952">
    <property type="entry name" value="Phosphogly_mut1"/>
</dbReference>
<dbReference type="NCBIfam" id="TIGR01258">
    <property type="entry name" value="pgm_1"/>
    <property type="match status" value="1"/>
</dbReference>
<dbReference type="NCBIfam" id="NF002339">
    <property type="entry name" value="PRK01295.1"/>
    <property type="match status" value="1"/>
</dbReference>
<dbReference type="PANTHER" id="PTHR11931">
    <property type="entry name" value="PHOSPHOGLYCERATE MUTASE"/>
    <property type="match status" value="1"/>
</dbReference>
<dbReference type="Pfam" id="PF00300">
    <property type="entry name" value="His_Phos_1"/>
    <property type="match status" value="1"/>
</dbReference>
<dbReference type="PIRSF" id="PIRSF000709">
    <property type="entry name" value="6PFK_2-Ptase"/>
    <property type="match status" value="1"/>
</dbReference>
<dbReference type="SMART" id="SM00855">
    <property type="entry name" value="PGAM"/>
    <property type="match status" value="1"/>
</dbReference>
<dbReference type="SUPFAM" id="SSF53254">
    <property type="entry name" value="Phosphoglycerate mutase-like"/>
    <property type="match status" value="1"/>
</dbReference>
<dbReference type="PROSITE" id="PS00175">
    <property type="entry name" value="PG_MUTASE"/>
    <property type="match status" value="1"/>
</dbReference>
<protein>
    <recommendedName>
        <fullName evidence="1">2,3-bisphosphoglycerate-dependent phosphoglycerate mutase</fullName>
        <shortName evidence="1">BPG-dependent PGAM</shortName>
        <shortName evidence="1">PGAM</shortName>
        <shortName evidence="1">Phosphoglyceromutase</shortName>
        <shortName evidence="1">dPGM</shortName>
        <ecNumber evidence="1">5.4.2.11</ecNumber>
    </recommendedName>
</protein>
<proteinExistence type="inferred from homology"/>
<gene>
    <name evidence="1" type="primary">gpmA</name>
    <name type="synonym">pgm</name>
    <name type="ordered locus">BH12450</name>
</gene>
<reference key="1">
    <citation type="journal article" date="2002" name="Proc. Natl. Acad. Sci. U.S.A.">
        <title>The global phylogeny of glycolytic enzymes.</title>
        <authorList>
            <person name="Canback B."/>
            <person name="Andersson S.G.E."/>
            <person name="Kurland C.G."/>
        </authorList>
    </citation>
    <scope>NUCLEOTIDE SEQUENCE [GENOMIC DNA]</scope>
    <source>
        <strain>ATCC 49882 / DSM 28221 / CCUG 30454 / Houston 1</strain>
    </source>
</reference>
<reference key="2">
    <citation type="journal article" date="2004" name="Proc. Natl. Acad. Sci. U.S.A.">
        <title>The louse-borne human pathogen Bartonella quintana is a genomic derivative of the zoonotic agent Bartonella henselae.</title>
        <authorList>
            <person name="Alsmark U.C.M."/>
            <person name="Frank A.C."/>
            <person name="Karlberg E.O."/>
            <person name="Legault B.-A."/>
            <person name="Ardell D.H."/>
            <person name="Canbaeck B."/>
            <person name="Eriksson A.-S."/>
            <person name="Naeslund A.K."/>
            <person name="Handley S.A."/>
            <person name="Huvet M."/>
            <person name="La Scola B."/>
            <person name="Holmberg M."/>
            <person name="Andersson S.G.E."/>
        </authorList>
    </citation>
    <scope>NUCLEOTIDE SEQUENCE [LARGE SCALE GENOMIC DNA]</scope>
    <source>
        <strain>ATCC 49882 / DSM 28221 / CCUG 30454 / Houston 1</strain>
    </source>
</reference>
<evidence type="ECO:0000255" key="1">
    <source>
        <dbReference type="HAMAP-Rule" id="MF_01039"/>
    </source>
</evidence>
<sequence>MERTLVLIRHGQSEWNLKNLFTGWKDPGLTEKGRTEAIAAGKKLKETGLKFDIAYTSALQRAQKTAQNILEQMEQSDLELIKTPALNERNYGDLSGLNKDEVRQKWGEQQVQIWRRSYTIAPPNGESLRDTGARVWPYYLHHIQPHILRSQTVLIAAHGNSLRALIMALEGLNSEEIISQELATGIPIVYTFNSDSTISSKTIITP</sequence>
<keyword id="KW-0312">Gluconeogenesis</keyword>
<keyword id="KW-0324">Glycolysis</keyword>
<keyword id="KW-0413">Isomerase</keyword>
<feature type="chain" id="PRO_0000179848" description="2,3-bisphosphoglycerate-dependent phosphoglycerate mutase">
    <location>
        <begin position="1"/>
        <end position="206"/>
    </location>
</feature>
<feature type="active site" description="Tele-phosphohistidine intermediate" evidence="1">
    <location>
        <position position="10"/>
    </location>
</feature>
<feature type="active site" description="Proton donor/acceptor" evidence="1">
    <location>
        <position position="88"/>
    </location>
</feature>
<feature type="binding site" evidence="1">
    <location>
        <begin position="9"/>
        <end position="16"/>
    </location>
    <ligand>
        <name>substrate</name>
    </ligand>
</feature>
<feature type="binding site" evidence="1">
    <location>
        <begin position="22"/>
        <end position="23"/>
    </location>
    <ligand>
        <name>substrate</name>
    </ligand>
</feature>
<feature type="binding site" evidence="1">
    <location>
        <position position="61"/>
    </location>
    <ligand>
        <name>substrate</name>
    </ligand>
</feature>
<feature type="binding site" evidence="1">
    <location>
        <begin position="88"/>
        <end position="91"/>
    </location>
    <ligand>
        <name>substrate</name>
    </ligand>
</feature>
<feature type="binding site" evidence="1">
    <location>
        <position position="99"/>
    </location>
    <ligand>
        <name>substrate</name>
    </ligand>
</feature>
<feature type="binding site" evidence="1">
    <location>
        <begin position="115"/>
        <end position="116"/>
    </location>
    <ligand>
        <name>substrate</name>
    </ligand>
</feature>
<feature type="binding site" evidence="1">
    <location>
        <begin position="159"/>
        <end position="160"/>
    </location>
    <ligand>
        <name>substrate</name>
    </ligand>
</feature>
<feature type="site" description="Transition state stabilizer" evidence="1">
    <location>
        <position position="158"/>
    </location>
</feature>